<dbReference type="EMBL" id="AY210151">
    <property type="protein sequence ID" value="AAO46567.1"/>
    <property type="molecule type" value="Genomic_RNA"/>
</dbReference>
<dbReference type="SMR" id="Q6XTK0"/>
<dbReference type="GO" id="GO:0030430">
    <property type="term" value="C:host cell cytoplasm"/>
    <property type="evidence" value="ECO:0007669"/>
    <property type="project" value="UniProtKB-SubCell"/>
</dbReference>
<dbReference type="GO" id="GO:0042025">
    <property type="term" value="C:host cell nucleus"/>
    <property type="evidence" value="ECO:0007669"/>
    <property type="project" value="UniProtKB-SubCell"/>
</dbReference>
<dbReference type="GO" id="GO:0030291">
    <property type="term" value="F:protein serine/threonine kinase inhibitor activity"/>
    <property type="evidence" value="ECO:0007669"/>
    <property type="project" value="UniProtKB-KW"/>
</dbReference>
<dbReference type="GO" id="GO:0003723">
    <property type="term" value="F:RNA binding"/>
    <property type="evidence" value="ECO:0007669"/>
    <property type="project" value="UniProtKB-KW"/>
</dbReference>
<dbReference type="GO" id="GO:0039540">
    <property type="term" value="P:symbiont-mediated suppression of host cytoplasmic pattern recognition receptor signaling pathway via inhibition of RIG-I activity"/>
    <property type="evidence" value="ECO:0007669"/>
    <property type="project" value="UniProtKB-KW"/>
</dbReference>
<dbReference type="GO" id="GO:0039657">
    <property type="term" value="P:symbiont-mediated suppression of host gene expression"/>
    <property type="evidence" value="ECO:0007669"/>
    <property type="project" value="UniProtKB-KW"/>
</dbReference>
<dbReference type="GO" id="GO:0039524">
    <property type="term" value="P:symbiont-mediated suppression of host mRNA processing"/>
    <property type="evidence" value="ECO:0007669"/>
    <property type="project" value="UniProtKB-KW"/>
</dbReference>
<dbReference type="GO" id="GO:0039580">
    <property type="term" value="P:symbiont-mediated suppression of host PKR/eIFalpha signaling"/>
    <property type="evidence" value="ECO:0007669"/>
    <property type="project" value="UniProtKB-KW"/>
</dbReference>
<dbReference type="GO" id="GO:0039502">
    <property type="term" value="P:symbiont-mediated suppression of host type I interferon-mediated signaling pathway"/>
    <property type="evidence" value="ECO:0007669"/>
    <property type="project" value="UniProtKB-KW"/>
</dbReference>
<dbReference type="FunFam" id="1.10.287.10:FF:000001">
    <property type="entry name" value="Non-structural protein 1"/>
    <property type="match status" value="1"/>
</dbReference>
<dbReference type="Gene3D" id="3.30.420.330">
    <property type="entry name" value="Influenza virus non-structural protein, effector domain"/>
    <property type="match status" value="1"/>
</dbReference>
<dbReference type="Gene3D" id="1.10.287.10">
    <property type="entry name" value="S15/NS1, RNA-binding"/>
    <property type="match status" value="1"/>
</dbReference>
<dbReference type="HAMAP" id="MF_04066">
    <property type="entry name" value="INFV_NS1"/>
    <property type="match status" value="1"/>
</dbReference>
<dbReference type="InterPro" id="IPR004208">
    <property type="entry name" value="NS1"/>
</dbReference>
<dbReference type="InterPro" id="IPR000256">
    <property type="entry name" value="NS1A"/>
</dbReference>
<dbReference type="InterPro" id="IPR038064">
    <property type="entry name" value="NS1A_effect_dom-like_sf"/>
</dbReference>
<dbReference type="InterPro" id="IPR009068">
    <property type="entry name" value="uS15_NS1_RNA-bd_sf"/>
</dbReference>
<dbReference type="Pfam" id="PF00600">
    <property type="entry name" value="Flu_NS1"/>
    <property type="match status" value="1"/>
</dbReference>
<dbReference type="SUPFAM" id="SSF143021">
    <property type="entry name" value="Ns1 effector domain-like"/>
    <property type="match status" value="1"/>
</dbReference>
<dbReference type="SUPFAM" id="SSF47060">
    <property type="entry name" value="S15/NS1 RNA-binding domain"/>
    <property type="match status" value="1"/>
</dbReference>
<organismHost>
    <name type="scientific">Aves</name>
    <dbReference type="NCBI Taxonomy" id="8782"/>
</organismHost>
<organismHost>
    <name type="scientific">Homo sapiens</name>
    <name type="common">Human</name>
    <dbReference type="NCBI Taxonomy" id="9606"/>
</organismHost>
<gene>
    <name evidence="1" type="primary">NS</name>
</gene>
<name>NS1_I57A5</name>
<feature type="chain" id="PRO_0000324241" description="Non-structural protein 1">
    <location>
        <begin position="1"/>
        <end position="203"/>
    </location>
</feature>
<feature type="region of interest" description="RNA-binding and homodimerization" evidence="1">
    <location>
        <begin position="1"/>
        <end position="73"/>
    </location>
</feature>
<feature type="short sequence motif" description="Nuclear localization signal" evidence="1">
    <location>
        <begin position="34"/>
        <end position="38"/>
    </location>
</feature>
<feature type="short sequence motif" description="Nuclear export signal" evidence="1">
    <location>
        <begin position="137"/>
        <end position="146"/>
    </location>
</feature>
<sequence length="203" mass="22968">MDPNTVSSFQVDCFLWHVRKQVADQELGDAPFLDRLRRDQKSLRGRGSTLGLNIETATRVGKQIVERILKEESDEALKMTMASAPASRYLTDMTIEEMSRDWFMLMPKQKVSGPLCIRMDQAIMDKNIILKANFSVIFDRLETLILLRAFTEEGAIVGEISPLPSLPGHTNEDVKNAIGVLIGGLEWNDNTVRVSKTLQRFAW</sequence>
<reference key="1">
    <citation type="journal article" date="2004" name="Virology">
        <title>Genetic analysis of human H2N2 and early H3N2 influenza viruses, 1957-1972: evidence for genetic divergence and multiple reassortment events.</title>
        <authorList>
            <person name="Lindstrom S.E."/>
            <person name="Cox N.J."/>
            <person name="Klimov A."/>
        </authorList>
    </citation>
    <scope>NUCLEOTIDE SEQUENCE [GENOMIC RNA]</scope>
</reference>
<protein>
    <recommendedName>
        <fullName evidence="1">Non-structural protein 1</fullName>
        <shortName evidence="1">NS1</shortName>
    </recommendedName>
    <alternativeName>
        <fullName evidence="1">NS1A</fullName>
    </alternativeName>
</protein>
<proteinExistence type="inferred from homology"/>
<keyword id="KW-0025">Alternative splicing</keyword>
<keyword id="KW-1262">Eukaryotic host gene expression shutoff by virus</keyword>
<keyword id="KW-1035">Host cytoplasm</keyword>
<keyword id="KW-1190">Host gene expression shutoff by virus</keyword>
<keyword id="KW-1192">Host mRNA suppression by virus</keyword>
<keyword id="KW-1048">Host nucleus</keyword>
<keyword id="KW-0945">Host-virus interaction</keyword>
<keyword id="KW-1090">Inhibition of host innate immune response by virus</keyword>
<keyword id="KW-1114">Inhibition of host interferon signaling pathway by virus</keyword>
<keyword id="KW-1102">Inhibition of host PKR by virus</keyword>
<keyword id="KW-1103">Inhibition of host pre-mRNA processing by virus</keyword>
<keyword id="KW-1088">Inhibition of host RIG-I by virus</keyword>
<keyword id="KW-1113">Inhibition of host RLR pathway by virus</keyword>
<keyword id="KW-0922">Interferon antiviral system evasion</keyword>
<keyword id="KW-0694">RNA-binding</keyword>
<keyword id="KW-0832">Ubl conjugation</keyword>
<keyword id="KW-0899">Viral immunoevasion</keyword>
<evidence type="ECO:0000255" key="1">
    <source>
        <dbReference type="HAMAP-Rule" id="MF_04066"/>
    </source>
</evidence>
<comment type="function">
    <text evidence="1">Inhibits post-transcriptional processing of cellular pre-mRNA, by binding and inhibiting two cellular proteins that are required for the 3'-end processing of cellular pre-mRNAs: the 30 kDa cleavage and polyadenylation specificity factor/CPSF4 and the poly(A)-binding protein 2/PABPN1. In turn, unprocessed 3' end pre-mRNAs accumulate in the host nucleus and are no longer exported to the cytoplasm. Cellular protein synthesis is thereby shut off very early after virus infection. Viral protein synthesis is not affected by the inhibition of the cellular 3' end processing machinery because the poly(A) tails of viral mRNAs are produced by the viral polymerase through a stuttering mechanism. Prevents the establishment of the cellular antiviral state by inhibiting TRIM25-mediated RIGI ubiquitination, which normally triggers the antiviral transduction signal that leads to the activation of type I IFN genes by transcription factors IRF3 and IRF7. Also binds poly(A) and U6 snRNA. Inhibits the integrated stress response (ISR) in the infected cell by blocking dsRNA binding by EIF2AK2/PKR and further phosphorylation of EIF2S1/EIF-2ALPHA. Stress granule formation is thus inhibited, which allows protein synthesis and viral replication.</text>
</comment>
<comment type="subunit">
    <text evidence="1">Homodimer. Interacts with host TRIM25 (via coiled coil); this interaction specifically inhibits TRIM25 multimerization and TRIM25-mediated RIGI CARD ubiquitination. Interacts with human EIF2AK2/PKR, CPSF4, IVNS1ABP and PABPN1.</text>
</comment>
<comment type="subcellular location">
    <subcellularLocation>
        <location evidence="1">Host nucleus</location>
    </subcellularLocation>
    <subcellularLocation>
        <location evidence="1">Host cytoplasm</location>
    </subcellularLocation>
    <text evidence="1">In uninfected, transfected cells, NS1 is localized in the nucleus. Only in virus infected cells, the nuclear export signal is unveiled, presumably by a viral protein, and a fraction of NS1 is exported in the cytoplasm.</text>
</comment>
<comment type="alternative products">
    <event type="alternative splicing"/>
    <isoform>
        <id>Q6XTK0-1</id>
        <name>NS1</name>
        <sequence type="displayed"/>
    </isoform>
    <isoform>
        <id>Q6XTK1-1</id>
        <name>NEP</name>
        <name>NS2</name>
        <sequence type="external"/>
    </isoform>
</comment>
<comment type="domain">
    <text evidence="1">The dsRNA-binding region is required for suppression of RNA silencing.</text>
</comment>
<comment type="PTM">
    <text evidence="1">Upon interferon induction, ISGylated via host HERC5; this results in the impairment of NS1 interaction with RNA targets due to its inability to form homodimers and to interact with host EIF2AK2/PKR.</text>
</comment>
<comment type="similarity">
    <text evidence="1">Belongs to the influenza A viruses NS1 family.</text>
</comment>
<accession>Q6XTK0</accession>
<organism>
    <name type="scientific">Influenza A virus (strain A/Singapore/1/1957 H2N2)</name>
    <dbReference type="NCBI Taxonomy" id="382781"/>
    <lineage>
        <taxon>Viruses</taxon>
        <taxon>Riboviria</taxon>
        <taxon>Orthornavirae</taxon>
        <taxon>Negarnaviricota</taxon>
        <taxon>Polyploviricotina</taxon>
        <taxon>Insthoviricetes</taxon>
        <taxon>Articulavirales</taxon>
        <taxon>Orthomyxoviridae</taxon>
        <taxon>Alphainfluenzavirus</taxon>
        <taxon>Alphainfluenzavirus influenzae</taxon>
        <taxon>Influenza A virus</taxon>
    </lineage>
</organism>